<accession>Q3JYM3</accession>
<comment type="function">
    <text evidence="1">This protein is involved in the repair of mismatches in DNA. It is possible that it carries out the mismatch recognition step. This protein has a weak ATPase activity.</text>
</comment>
<comment type="similarity">
    <text evidence="1">Belongs to the DNA mismatch repair MutS family.</text>
</comment>
<dbReference type="EMBL" id="CP000114">
    <property type="protein sequence ID" value="ABA44611.1"/>
    <property type="molecule type" value="Genomic_DNA"/>
</dbReference>
<dbReference type="RefSeq" id="WP_001118379.1">
    <property type="nucleotide sequence ID" value="NC_007432.1"/>
</dbReference>
<dbReference type="SMR" id="Q3JYM3"/>
<dbReference type="KEGG" id="sak:SAK_2040"/>
<dbReference type="HOGENOM" id="CLU_002472_3_1_9"/>
<dbReference type="GO" id="GO:0005829">
    <property type="term" value="C:cytosol"/>
    <property type="evidence" value="ECO:0007669"/>
    <property type="project" value="TreeGrafter"/>
</dbReference>
<dbReference type="GO" id="GO:0005524">
    <property type="term" value="F:ATP binding"/>
    <property type="evidence" value="ECO:0007669"/>
    <property type="project" value="UniProtKB-UniRule"/>
</dbReference>
<dbReference type="GO" id="GO:0140664">
    <property type="term" value="F:ATP-dependent DNA damage sensor activity"/>
    <property type="evidence" value="ECO:0007669"/>
    <property type="project" value="InterPro"/>
</dbReference>
<dbReference type="GO" id="GO:0003684">
    <property type="term" value="F:damaged DNA binding"/>
    <property type="evidence" value="ECO:0007669"/>
    <property type="project" value="UniProtKB-UniRule"/>
</dbReference>
<dbReference type="GO" id="GO:0030983">
    <property type="term" value="F:mismatched DNA binding"/>
    <property type="evidence" value="ECO:0007669"/>
    <property type="project" value="InterPro"/>
</dbReference>
<dbReference type="GO" id="GO:0006298">
    <property type="term" value="P:mismatch repair"/>
    <property type="evidence" value="ECO:0007669"/>
    <property type="project" value="UniProtKB-UniRule"/>
</dbReference>
<dbReference type="CDD" id="cd03284">
    <property type="entry name" value="ABC_MutS1"/>
    <property type="match status" value="1"/>
</dbReference>
<dbReference type="FunFam" id="1.10.1420.10:FF:000001">
    <property type="entry name" value="DNA mismatch repair protein MutS"/>
    <property type="match status" value="1"/>
</dbReference>
<dbReference type="FunFam" id="3.40.1170.10:FF:000001">
    <property type="entry name" value="DNA mismatch repair protein MutS"/>
    <property type="match status" value="1"/>
</dbReference>
<dbReference type="FunFam" id="3.40.50.300:FF:000896">
    <property type="entry name" value="DNA mismatch repair protein MutS"/>
    <property type="match status" value="1"/>
</dbReference>
<dbReference type="Gene3D" id="1.10.1420.10">
    <property type="match status" value="2"/>
</dbReference>
<dbReference type="Gene3D" id="3.40.1170.10">
    <property type="entry name" value="DNA repair protein MutS, domain I"/>
    <property type="match status" value="1"/>
</dbReference>
<dbReference type="Gene3D" id="3.30.420.110">
    <property type="entry name" value="MutS, connector domain"/>
    <property type="match status" value="1"/>
</dbReference>
<dbReference type="Gene3D" id="3.40.50.300">
    <property type="entry name" value="P-loop containing nucleotide triphosphate hydrolases"/>
    <property type="match status" value="1"/>
</dbReference>
<dbReference type="HAMAP" id="MF_00096">
    <property type="entry name" value="MutS"/>
    <property type="match status" value="1"/>
</dbReference>
<dbReference type="InterPro" id="IPR005748">
    <property type="entry name" value="DNA_mismatch_repair_MutS"/>
</dbReference>
<dbReference type="InterPro" id="IPR007695">
    <property type="entry name" value="DNA_mismatch_repair_MutS-lik_N"/>
</dbReference>
<dbReference type="InterPro" id="IPR017261">
    <property type="entry name" value="DNA_mismatch_repair_MutS/MSH"/>
</dbReference>
<dbReference type="InterPro" id="IPR000432">
    <property type="entry name" value="DNA_mismatch_repair_MutS_C"/>
</dbReference>
<dbReference type="InterPro" id="IPR007861">
    <property type="entry name" value="DNA_mismatch_repair_MutS_clamp"/>
</dbReference>
<dbReference type="InterPro" id="IPR007696">
    <property type="entry name" value="DNA_mismatch_repair_MutS_core"/>
</dbReference>
<dbReference type="InterPro" id="IPR016151">
    <property type="entry name" value="DNA_mismatch_repair_MutS_N"/>
</dbReference>
<dbReference type="InterPro" id="IPR036187">
    <property type="entry name" value="DNA_mismatch_repair_MutS_sf"/>
</dbReference>
<dbReference type="InterPro" id="IPR007860">
    <property type="entry name" value="DNA_mmatch_repair_MutS_con_dom"/>
</dbReference>
<dbReference type="InterPro" id="IPR045076">
    <property type="entry name" value="MutS"/>
</dbReference>
<dbReference type="InterPro" id="IPR036678">
    <property type="entry name" value="MutS_con_dom_sf"/>
</dbReference>
<dbReference type="InterPro" id="IPR027417">
    <property type="entry name" value="P-loop_NTPase"/>
</dbReference>
<dbReference type="NCBIfam" id="TIGR01070">
    <property type="entry name" value="mutS1"/>
    <property type="match status" value="1"/>
</dbReference>
<dbReference type="NCBIfam" id="NF003810">
    <property type="entry name" value="PRK05399.1"/>
    <property type="match status" value="1"/>
</dbReference>
<dbReference type="PANTHER" id="PTHR11361:SF34">
    <property type="entry name" value="DNA MISMATCH REPAIR PROTEIN MSH1, MITOCHONDRIAL"/>
    <property type="match status" value="1"/>
</dbReference>
<dbReference type="PANTHER" id="PTHR11361">
    <property type="entry name" value="DNA MISMATCH REPAIR PROTEIN MUTS FAMILY MEMBER"/>
    <property type="match status" value="1"/>
</dbReference>
<dbReference type="Pfam" id="PF01624">
    <property type="entry name" value="MutS_I"/>
    <property type="match status" value="1"/>
</dbReference>
<dbReference type="Pfam" id="PF05188">
    <property type="entry name" value="MutS_II"/>
    <property type="match status" value="1"/>
</dbReference>
<dbReference type="Pfam" id="PF05192">
    <property type="entry name" value="MutS_III"/>
    <property type="match status" value="1"/>
</dbReference>
<dbReference type="Pfam" id="PF05190">
    <property type="entry name" value="MutS_IV"/>
    <property type="match status" value="1"/>
</dbReference>
<dbReference type="Pfam" id="PF00488">
    <property type="entry name" value="MutS_V"/>
    <property type="match status" value="1"/>
</dbReference>
<dbReference type="PIRSF" id="PIRSF037677">
    <property type="entry name" value="DNA_mis_repair_Msh6"/>
    <property type="match status" value="1"/>
</dbReference>
<dbReference type="SMART" id="SM00534">
    <property type="entry name" value="MUTSac"/>
    <property type="match status" value="1"/>
</dbReference>
<dbReference type="SMART" id="SM00533">
    <property type="entry name" value="MUTSd"/>
    <property type="match status" value="1"/>
</dbReference>
<dbReference type="SUPFAM" id="SSF55271">
    <property type="entry name" value="DNA repair protein MutS, domain I"/>
    <property type="match status" value="1"/>
</dbReference>
<dbReference type="SUPFAM" id="SSF53150">
    <property type="entry name" value="DNA repair protein MutS, domain II"/>
    <property type="match status" value="1"/>
</dbReference>
<dbReference type="SUPFAM" id="SSF48334">
    <property type="entry name" value="DNA repair protein MutS, domain III"/>
    <property type="match status" value="1"/>
</dbReference>
<dbReference type="SUPFAM" id="SSF52540">
    <property type="entry name" value="P-loop containing nucleoside triphosphate hydrolases"/>
    <property type="match status" value="1"/>
</dbReference>
<dbReference type="PROSITE" id="PS00486">
    <property type="entry name" value="DNA_MISMATCH_REPAIR_2"/>
    <property type="match status" value="1"/>
</dbReference>
<protein>
    <recommendedName>
        <fullName evidence="1">DNA mismatch repair protein MutS</fullName>
    </recommendedName>
</protein>
<proteinExistence type="inferred from homology"/>
<feature type="chain" id="PRO_0000224409" description="DNA mismatch repair protein MutS">
    <location>
        <begin position="1"/>
        <end position="858"/>
    </location>
</feature>
<feature type="binding site" evidence="1">
    <location>
        <begin position="603"/>
        <end position="610"/>
    </location>
    <ligand>
        <name>ATP</name>
        <dbReference type="ChEBI" id="CHEBI:30616"/>
    </ligand>
</feature>
<reference key="1">
    <citation type="journal article" date="2005" name="Proc. Natl. Acad. Sci. U.S.A.">
        <title>Genome analysis of multiple pathogenic isolates of Streptococcus agalactiae: implications for the microbial 'pan-genome'.</title>
        <authorList>
            <person name="Tettelin H."/>
            <person name="Masignani V."/>
            <person name="Cieslewicz M.J."/>
            <person name="Donati C."/>
            <person name="Medini D."/>
            <person name="Ward N.L."/>
            <person name="Angiuoli S.V."/>
            <person name="Crabtree J."/>
            <person name="Jones A.L."/>
            <person name="Durkin A.S."/>
            <person name="DeBoy R.T."/>
            <person name="Davidsen T.M."/>
            <person name="Mora M."/>
            <person name="Scarselli M."/>
            <person name="Margarit y Ros I."/>
            <person name="Peterson J.D."/>
            <person name="Hauser C.R."/>
            <person name="Sundaram J.P."/>
            <person name="Nelson W.C."/>
            <person name="Madupu R."/>
            <person name="Brinkac L.M."/>
            <person name="Dodson R.J."/>
            <person name="Rosovitz M.J."/>
            <person name="Sullivan S.A."/>
            <person name="Daugherty S.C."/>
            <person name="Haft D.H."/>
            <person name="Selengut J."/>
            <person name="Gwinn M.L."/>
            <person name="Zhou L."/>
            <person name="Zafar N."/>
            <person name="Khouri H."/>
            <person name="Radune D."/>
            <person name="Dimitrov G."/>
            <person name="Watkins K."/>
            <person name="O'Connor K.J."/>
            <person name="Smith S."/>
            <person name="Utterback T.R."/>
            <person name="White O."/>
            <person name="Rubens C.E."/>
            <person name="Grandi G."/>
            <person name="Madoff L.C."/>
            <person name="Kasper D.L."/>
            <person name="Telford J.L."/>
            <person name="Wessels M.R."/>
            <person name="Rappuoli R."/>
            <person name="Fraser C.M."/>
        </authorList>
    </citation>
    <scope>NUCLEOTIDE SEQUENCE [LARGE SCALE GENOMIC DNA]</scope>
    <source>
        <strain>ATCC 27591 / A909 / CDC SS700</strain>
    </source>
</reference>
<name>MUTS_STRA1</name>
<evidence type="ECO:0000255" key="1">
    <source>
        <dbReference type="HAMAP-Rule" id="MF_00096"/>
    </source>
</evidence>
<organism>
    <name type="scientific">Streptococcus agalactiae serotype Ia (strain ATCC 27591 / A909 / CDC SS700)</name>
    <dbReference type="NCBI Taxonomy" id="205921"/>
    <lineage>
        <taxon>Bacteria</taxon>
        <taxon>Bacillati</taxon>
        <taxon>Bacillota</taxon>
        <taxon>Bacilli</taxon>
        <taxon>Lactobacillales</taxon>
        <taxon>Streptococcaceae</taxon>
        <taxon>Streptococcus</taxon>
    </lineage>
</organism>
<sequence length="858" mass="96992">MAKPTISPGMQQYLDIKENYPDAFLLFRMGDFYELFYDDAVKAAQILEISLTSRNKNAEKPIPMAGVPYHSAQQYIDVLVELGYKVAIAEQMEDPKKAVGVVKREVVQVVTPGTVVESTKPDSANNFLVAIDSQDQQTFGLAYMDVSTGEFQATLLTDFESVRSEILNLKAREIVVGYQLTDEKNHLLTKQMNLLLSYEDERLNDIHLIDEQLTDLEISAAEKLLQYVHRTQKRELSHLQKVVHYEIKDYLQMSYATKNSLDLLENARTSKKHGSLYWLLDETKTAMGTRMLRTWIDRPLVSMNRIKERQDIIQVFLDYFFERNDLTESLKGVYDIERLASRVSFGKANPKDLLQLGQTLSQIPRIKMILQSFNQPELDIVVNKIDTMPELESLINTAIAPEAQATITEGNIIKSGFDKQLDNYRTVMREGTGWIADIEAKERAASGIGTLKIDYNKKDGYYFHVTNSNLSLVPEHFFRKATLKNSERYGTAELAKIEGEVLEAREQSSNLEYDIFMRVRAQVESYIKRLQELAKTIATVDVLQSLAVVAENHHYVRPKFNDEHQIKIKNGRHATVEKVMGVQEYIPNSIYFDSQTDIQLITGPNMSGKSTYMRQLALTVIMAQMGGFVSADEVDLPVFDAIFTRIGAADDLISGQSTFMVEMMEANQAVKRASDKSLILFDELGRGTATYDGMALAQSIIEYIHDRVRAKTMFATHYHELTDLSEQLTRLVNVHVATLERDGEVTFLHKIESGPADKSYGIHVAKIAGLPIDLLDRATDILSQLEADAVQLIVSAPQEAVTADLNEELDSEKQQGQLSLFEEPSNAGRVIEELEAIDIMNLTPMQAMNAIFDLKKLL</sequence>
<gene>
    <name evidence="1" type="primary">mutS</name>
    <name type="ordered locus">SAK_2040</name>
</gene>
<keyword id="KW-0067">ATP-binding</keyword>
<keyword id="KW-0227">DNA damage</keyword>
<keyword id="KW-0234">DNA repair</keyword>
<keyword id="KW-0238">DNA-binding</keyword>
<keyword id="KW-0547">Nucleotide-binding</keyword>